<comment type="function">
    <text evidence="1">Located at the top of the head of the 30S subunit, it contacts several helices of the 16S rRNA. In the 70S ribosome it contacts the 23S rRNA (bridge B1a) and protein L5 of the 50S subunit (bridge B1b), connecting the 2 subunits; these bridges are implicated in subunit movement. Contacts the tRNAs in the A and P-sites.</text>
</comment>
<comment type="subunit">
    <text evidence="1">Part of the 30S ribosomal subunit. Forms a loose heterodimer with protein S19. Forms two bridges to the 50S subunit in the 70S ribosome.</text>
</comment>
<comment type="similarity">
    <text evidence="1">Belongs to the universal ribosomal protein uS13 family.</text>
</comment>
<accession>A0L5Z5</accession>
<gene>
    <name evidence="1" type="primary">rpsM</name>
    <name type="ordered locus">Mmc1_0869</name>
</gene>
<evidence type="ECO:0000255" key="1">
    <source>
        <dbReference type="HAMAP-Rule" id="MF_01315"/>
    </source>
</evidence>
<evidence type="ECO:0000256" key="2">
    <source>
        <dbReference type="SAM" id="MobiDB-lite"/>
    </source>
</evidence>
<evidence type="ECO:0000305" key="3"/>
<feature type="chain" id="PRO_0000306639" description="Small ribosomal subunit protein uS13">
    <location>
        <begin position="1"/>
        <end position="122"/>
    </location>
</feature>
<feature type="region of interest" description="Disordered" evidence="2">
    <location>
        <begin position="96"/>
        <end position="122"/>
    </location>
</feature>
<name>RS13_MAGMM</name>
<sequence length="122" mass="13827">MARIAGVNIPVNKRVEIALTYIYGICRDSAKRITKEAGIEPQVRVSDLTDAEVAQLRDIIDNNHTVEGDLRRQIAMNVKRLMDLGCYRGLRHRRGLPCRGQRTHTNARTRKGPRKPIAGKKK</sequence>
<protein>
    <recommendedName>
        <fullName evidence="1">Small ribosomal subunit protein uS13</fullName>
    </recommendedName>
    <alternativeName>
        <fullName evidence="3">30S ribosomal protein S13</fullName>
    </alternativeName>
</protein>
<keyword id="KW-1185">Reference proteome</keyword>
<keyword id="KW-0687">Ribonucleoprotein</keyword>
<keyword id="KW-0689">Ribosomal protein</keyword>
<keyword id="KW-0694">RNA-binding</keyword>
<keyword id="KW-0699">rRNA-binding</keyword>
<keyword id="KW-0820">tRNA-binding</keyword>
<organism>
    <name type="scientific">Magnetococcus marinus (strain ATCC BAA-1437 / JCM 17883 / MC-1)</name>
    <dbReference type="NCBI Taxonomy" id="156889"/>
    <lineage>
        <taxon>Bacteria</taxon>
        <taxon>Pseudomonadati</taxon>
        <taxon>Pseudomonadota</taxon>
        <taxon>Alphaproteobacteria</taxon>
        <taxon>Magnetococcales</taxon>
        <taxon>Magnetococcaceae</taxon>
        <taxon>Magnetococcus</taxon>
    </lineage>
</organism>
<reference key="1">
    <citation type="journal article" date="2009" name="Appl. Environ. Microbiol.">
        <title>Complete genome sequence of the chemolithoautotrophic marine magnetotactic coccus strain MC-1.</title>
        <authorList>
            <person name="Schubbe S."/>
            <person name="Williams T.J."/>
            <person name="Xie G."/>
            <person name="Kiss H.E."/>
            <person name="Brettin T.S."/>
            <person name="Martinez D."/>
            <person name="Ross C.A."/>
            <person name="Schuler D."/>
            <person name="Cox B.L."/>
            <person name="Nealson K.H."/>
            <person name="Bazylinski D.A."/>
        </authorList>
    </citation>
    <scope>NUCLEOTIDE SEQUENCE [LARGE SCALE GENOMIC DNA]</scope>
    <source>
        <strain>ATCC BAA-1437 / JCM 17883 / MC-1</strain>
    </source>
</reference>
<proteinExistence type="inferred from homology"/>
<dbReference type="EMBL" id="CP000471">
    <property type="protein sequence ID" value="ABK43388.1"/>
    <property type="molecule type" value="Genomic_DNA"/>
</dbReference>
<dbReference type="RefSeq" id="WP_011712547.1">
    <property type="nucleotide sequence ID" value="NC_008576.1"/>
</dbReference>
<dbReference type="SMR" id="A0L5Z5"/>
<dbReference type="STRING" id="156889.Mmc1_0869"/>
<dbReference type="KEGG" id="mgm:Mmc1_0869"/>
<dbReference type="eggNOG" id="COG0099">
    <property type="taxonomic scope" value="Bacteria"/>
</dbReference>
<dbReference type="HOGENOM" id="CLU_103849_1_2_5"/>
<dbReference type="OrthoDB" id="9803610at2"/>
<dbReference type="Proteomes" id="UP000002586">
    <property type="component" value="Chromosome"/>
</dbReference>
<dbReference type="GO" id="GO:0005829">
    <property type="term" value="C:cytosol"/>
    <property type="evidence" value="ECO:0007669"/>
    <property type="project" value="TreeGrafter"/>
</dbReference>
<dbReference type="GO" id="GO:0015935">
    <property type="term" value="C:small ribosomal subunit"/>
    <property type="evidence" value="ECO:0007669"/>
    <property type="project" value="TreeGrafter"/>
</dbReference>
<dbReference type="GO" id="GO:0019843">
    <property type="term" value="F:rRNA binding"/>
    <property type="evidence" value="ECO:0007669"/>
    <property type="project" value="UniProtKB-UniRule"/>
</dbReference>
<dbReference type="GO" id="GO:0003735">
    <property type="term" value="F:structural constituent of ribosome"/>
    <property type="evidence" value="ECO:0007669"/>
    <property type="project" value="InterPro"/>
</dbReference>
<dbReference type="GO" id="GO:0000049">
    <property type="term" value="F:tRNA binding"/>
    <property type="evidence" value="ECO:0007669"/>
    <property type="project" value="UniProtKB-UniRule"/>
</dbReference>
<dbReference type="GO" id="GO:0006412">
    <property type="term" value="P:translation"/>
    <property type="evidence" value="ECO:0007669"/>
    <property type="project" value="UniProtKB-UniRule"/>
</dbReference>
<dbReference type="FunFam" id="1.10.8.50:FF:000001">
    <property type="entry name" value="30S ribosomal protein S13"/>
    <property type="match status" value="1"/>
</dbReference>
<dbReference type="FunFam" id="4.10.910.10:FF:000001">
    <property type="entry name" value="30S ribosomal protein S13"/>
    <property type="match status" value="1"/>
</dbReference>
<dbReference type="Gene3D" id="1.10.8.50">
    <property type="match status" value="1"/>
</dbReference>
<dbReference type="Gene3D" id="4.10.910.10">
    <property type="entry name" value="30s ribosomal protein s13, domain 2"/>
    <property type="match status" value="1"/>
</dbReference>
<dbReference type="HAMAP" id="MF_01315">
    <property type="entry name" value="Ribosomal_uS13"/>
    <property type="match status" value="1"/>
</dbReference>
<dbReference type="InterPro" id="IPR027437">
    <property type="entry name" value="Rbsml_uS13_C"/>
</dbReference>
<dbReference type="InterPro" id="IPR001892">
    <property type="entry name" value="Ribosomal_uS13"/>
</dbReference>
<dbReference type="InterPro" id="IPR010979">
    <property type="entry name" value="Ribosomal_uS13-like_H2TH"/>
</dbReference>
<dbReference type="InterPro" id="IPR019980">
    <property type="entry name" value="Ribosomal_uS13_bac-type"/>
</dbReference>
<dbReference type="InterPro" id="IPR018269">
    <property type="entry name" value="Ribosomal_uS13_CS"/>
</dbReference>
<dbReference type="NCBIfam" id="TIGR03631">
    <property type="entry name" value="uS13_bact"/>
    <property type="match status" value="1"/>
</dbReference>
<dbReference type="PANTHER" id="PTHR10871">
    <property type="entry name" value="30S RIBOSOMAL PROTEIN S13/40S RIBOSOMAL PROTEIN S18"/>
    <property type="match status" value="1"/>
</dbReference>
<dbReference type="PANTHER" id="PTHR10871:SF1">
    <property type="entry name" value="SMALL RIBOSOMAL SUBUNIT PROTEIN US13M"/>
    <property type="match status" value="1"/>
</dbReference>
<dbReference type="Pfam" id="PF00416">
    <property type="entry name" value="Ribosomal_S13"/>
    <property type="match status" value="1"/>
</dbReference>
<dbReference type="PIRSF" id="PIRSF002134">
    <property type="entry name" value="Ribosomal_S13"/>
    <property type="match status" value="1"/>
</dbReference>
<dbReference type="SUPFAM" id="SSF46946">
    <property type="entry name" value="S13-like H2TH domain"/>
    <property type="match status" value="1"/>
</dbReference>
<dbReference type="PROSITE" id="PS00646">
    <property type="entry name" value="RIBOSOMAL_S13_1"/>
    <property type="match status" value="1"/>
</dbReference>
<dbReference type="PROSITE" id="PS50159">
    <property type="entry name" value="RIBOSOMAL_S13_2"/>
    <property type="match status" value="1"/>
</dbReference>